<dbReference type="EMBL" id="L22466">
    <property type="protein sequence ID" value="AAA21915.1"/>
    <property type="molecule type" value="Genomic_DNA"/>
</dbReference>
<dbReference type="SMR" id="P0DJ09"/>
<dbReference type="GO" id="GO:0022627">
    <property type="term" value="C:cytosolic small ribosomal subunit"/>
    <property type="evidence" value="ECO:0007669"/>
    <property type="project" value="TreeGrafter"/>
</dbReference>
<dbReference type="GO" id="GO:0003729">
    <property type="term" value="F:mRNA binding"/>
    <property type="evidence" value="ECO:0007669"/>
    <property type="project" value="UniProtKB-UniRule"/>
</dbReference>
<dbReference type="GO" id="GO:0019843">
    <property type="term" value="F:rRNA binding"/>
    <property type="evidence" value="ECO:0007669"/>
    <property type="project" value="UniProtKB-UniRule"/>
</dbReference>
<dbReference type="GO" id="GO:0003735">
    <property type="term" value="F:structural constituent of ribosome"/>
    <property type="evidence" value="ECO:0007669"/>
    <property type="project" value="InterPro"/>
</dbReference>
<dbReference type="GO" id="GO:0006412">
    <property type="term" value="P:translation"/>
    <property type="evidence" value="ECO:0007669"/>
    <property type="project" value="UniProtKB-UniRule"/>
</dbReference>
<dbReference type="CDD" id="cd02412">
    <property type="entry name" value="KH-II_30S_S3"/>
    <property type="match status" value="1"/>
</dbReference>
<dbReference type="FunFam" id="3.30.300.20:FF:000001">
    <property type="entry name" value="30S ribosomal protein S3"/>
    <property type="match status" value="1"/>
</dbReference>
<dbReference type="Gene3D" id="3.30.300.20">
    <property type="match status" value="1"/>
</dbReference>
<dbReference type="Gene3D" id="3.30.1140.32">
    <property type="entry name" value="Ribosomal protein S3, C-terminal domain"/>
    <property type="match status" value="1"/>
</dbReference>
<dbReference type="HAMAP" id="MF_01309_B">
    <property type="entry name" value="Ribosomal_uS3_B"/>
    <property type="match status" value="1"/>
</dbReference>
<dbReference type="InterPro" id="IPR004087">
    <property type="entry name" value="KH_dom"/>
</dbReference>
<dbReference type="InterPro" id="IPR015946">
    <property type="entry name" value="KH_dom-like_a/b"/>
</dbReference>
<dbReference type="InterPro" id="IPR004044">
    <property type="entry name" value="KH_dom_type_2"/>
</dbReference>
<dbReference type="InterPro" id="IPR009019">
    <property type="entry name" value="KH_sf_prok-type"/>
</dbReference>
<dbReference type="InterPro" id="IPR036419">
    <property type="entry name" value="Ribosomal_S3_C_sf"/>
</dbReference>
<dbReference type="InterPro" id="IPR005704">
    <property type="entry name" value="Ribosomal_uS3_bac-typ"/>
</dbReference>
<dbReference type="InterPro" id="IPR001351">
    <property type="entry name" value="Ribosomal_uS3_C"/>
</dbReference>
<dbReference type="InterPro" id="IPR018280">
    <property type="entry name" value="Ribosomal_uS3_CS"/>
</dbReference>
<dbReference type="NCBIfam" id="TIGR01009">
    <property type="entry name" value="rpsC_bact"/>
    <property type="match status" value="1"/>
</dbReference>
<dbReference type="PANTHER" id="PTHR11760">
    <property type="entry name" value="30S/40S RIBOSOMAL PROTEIN S3"/>
    <property type="match status" value="1"/>
</dbReference>
<dbReference type="PANTHER" id="PTHR11760:SF19">
    <property type="entry name" value="SMALL RIBOSOMAL SUBUNIT PROTEIN US3C"/>
    <property type="match status" value="1"/>
</dbReference>
<dbReference type="Pfam" id="PF07650">
    <property type="entry name" value="KH_2"/>
    <property type="match status" value="1"/>
</dbReference>
<dbReference type="Pfam" id="PF00189">
    <property type="entry name" value="Ribosomal_S3_C"/>
    <property type="match status" value="1"/>
</dbReference>
<dbReference type="SMART" id="SM00322">
    <property type="entry name" value="KH"/>
    <property type="match status" value="1"/>
</dbReference>
<dbReference type="SUPFAM" id="SSF54814">
    <property type="entry name" value="Prokaryotic type KH domain (KH-domain type II)"/>
    <property type="match status" value="1"/>
</dbReference>
<dbReference type="SUPFAM" id="SSF54821">
    <property type="entry name" value="Ribosomal protein S3 C-terminal domain"/>
    <property type="match status" value="1"/>
</dbReference>
<dbReference type="PROSITE" id="PS50823">
    <property type="entry name" value="KH_TYPE_2"/>
    <property type="match status" value="1"/>
</dbReference>
<dbReference type="PROSITE" id="PS00548">
    <property type="entry name" value="RIBOSOMAL_S3"/>
    <property type="match status" value="1"/>
</dbReference>
<proteinExistence type="inferred from homology"/>
<gene>
    <name evidence="1" type="primary">rpsC</name>
</gene>
<feature type="chain" id="PRO_0000413197" description="Small ribosomal subunit protein uS3">
    <location>
        <begin position="1"/>
        <end position="241"/>
    </location>
</feature>
<feature type="domain" description="KH type-2" evidence="1">
    <location>
        <begin position="39"/>
        <end position="108"/>
    </location>
</feature>
<feature type="region of interest" description="Disordered" evidence="2">
    <location>
        <begin position="215"/>
        <end position="241"/>
    </location>
</feature>
<feature type="compositionally biased region" description="Low complexity" evidence="2">
    <location>
        <begin position="232"/>
        <end position="241"/>
    </location>
</feature>
<protein>
    <recommendedName>
        <fullName evidence="1">Small ribosomal subunit protein uS3</fullName>
    </recommendedName>
    <alternativeName>
        <fullName evidence="3">30S ribosomal protein S3</fullName>
    </alternativeName>
</protein>
<reference key="1">
    <citation type="journal article" date="1994" name="Int. J. Syst. Bacteriol.">
        <title>Phylogenetic relationships among members of the class Mollicutes deduced from rps3 gene sequences.</title>
        <authorList>
            <person name="Toth K.T."/>
            <person name="Harrison N."/>
            <person name="Sears B.B."/>
        </authorList>
    </citation>
    <scope>NUCLEOTIDE SEQUENCE [GENOMIC DNA]</scope>
    <source>
        <strain>PP2</strain>
    </source>
</reference>
<organism>
    <name type="scientific">Mesoplasma florum</name>
    <name type="common">Acholeplasma florum</name>
    <dbReference type="NCBI Taxonomy" id="2151"/>
    <lineage>
        <taxon>Bacteria</taxon>
        <taxon>Bacillati</taxon>
        <taxon>Mycoplasmatota</taxon>
        <taxon>Mollicutes</taxon>
        <taxon>Entomoplasmatales</taxon>
        <taxon>Entomoplasmataceae</taxon>
        <taxon>Mesoplasma</taxon>
    </lineage>
</organism>
<evidence type="ECO:0000255" key="1">
    <source>
        <dbReference type="HAMAP-Rule" id="MF_01309"/>
    </source>
</evidence>
<evidence type="ECO:0000256" key="2">
    <source>
        <dbReference type="SAM" id="MobiDB-lite"/>
    </source>
</evidence>
<evidence type="ECO:0000305" key="3"/>
<sequence>MGQKVSPNVLRLGIVRDWEDTWYAEKDQYVKWLDQDIKIREGVLKLLKDAAVSKIKIERTNSNITLIIRTARPAIVLGQEGKNVSNIATAVQKIAKDRNLKVEVKVIEVKNPDADRTLVARWIGEQITNRASFRTVQKLAIRKALKAGVKGIKTSVSGRLGGVEMARTEGYIEGSVPLSTLRADIDYALYEAPTTYGQIGVKVWINHGEVIGGQSQRVSEKAPMNNDRRFNNKNNNRGGRK</sequence>
<keyword id="KW-0687">Ribonucleoprotein</keyword>
<keyword id="KW-0689">Ribosomal protein</keyword>
<keyword id="KW-0694">RNA-binding</keyword>
<keyword id="KW-0699">rRNA-binding</keyword>
<name>RS3_MESFO</name>
<comment type="function">
    <text evidence="1">Binds the lower part of the 30S subunit head. Binds mRNA in the 70S ribosome, positioning it for translation.</text>
</comment>
<comment type="subunit">
    <text evidence="1">Part of the 30S ribosomal subunit. Forms a tight complex with proteins S10 and S14.</text>
</comment>
<comment type="similarity">
    <text evidence="1">Belongs to the universal ribosomal protein uS3 family.</text>
</comment>
<accession>P0DJ09</accession>
<accession>P46247</accession>
<accession>Q6F1Y8</accession>